<keyword id="KW-0963">Cytoplasm</keyword>
<keyword id="KW-0597">Phosphoprotein</keyword>
<keyword id="KW-1185">Reference proteome</keyword>
<organism>
    <name type="scientific">Bos taurus</name>
    <name type="common">Bovine</name>
    <dbReference type="NCBI Taxonomy" id="9913"/>
    <lineage>
        <taxon>Eukaryota</taxon>
        <taxon>Metazoa</taxon>
        <taxon>Chordata</taxon>
        <taxon>Craniata</taxon>
        <taxon>Vertebrata</taxon>
        <taxon>Euteleostomi</taxon>
        <taxon>Mammalia</taxon>
        <taxon>Eutheria</taxon>
        <taxon>Laurasiatheria</taxon>
        <taxon>Artiodactyla</taxon>
        <taxon>Ruminantia</taxon>
        <taxon>Pecora</taxon>
        <taxon>Bovidae</taxon>
        <taxon>Bovinae</taxon>
        <taxon>Bos</taxon>
    </lineage>
</organism>
<name>TELT_BOVIN</name>
<feature type="chain" id="PRO_0000239294" description="Telethonin">
    <location>
        <begin position="1"/>
        <end position="166"/>
    </location>
</feature>
<feature type="region of interest" description="Disordered" evidence="3">
    <location>
        <begin position="145"/>
        <end position="166"/>
    </location>
</feature>
<feature type="compositionally biased region" description="Polar residues" evidence="3">
    <location>
        <begin position="156"/>
        <end position="166"/>
    </location>
</feature>
<feature type="modified residue" description="Phosphoserine" evidence="2">
    <location>
        <position position="39"/>
    </location>
</feature>
<accession>Q6T8D8</accession>
<accession>A5PJF8</accession>
<evidence type="ECO:0000250" key="1"/>
<evidence type="ECO:0000250" key="2">
    <source>
        <dbReference type="UniProtKB" id="O70548"/>
    </source>
</evidence>
<evidence type="ECO:0000256" key="3">
    <source>
        <dbReference type="SAM" id="MobiDB-lite"/>
    </source>
</evidence>
<protein>
    <recommendedName>
        <fullName>Telethonin</fullName>
    </recommendedName>
    <alternativeName>
        <fullName>Titin cap protein</fullName>
    </alternativeName>
</protein>
<comment type="function">
    <text evidence="1">Muscle assembly regulating factor. Mediates the antiparallel assembly of titin (TTN) molecules at the sarcomeric Z-disk (By similarity).</text>
</comment>
<comment type="subunit">
    <text evidence="1">Interacts with MYOZ1, MYOZ2 and MYOZ3. Interacts with CSRP3. Interacts directly with the N-terminal Ig-like domains of 2 titin (TTN) molecules. Interacts with ANKRD2; the interaction is direct (By similarity).</text>
</comment>
<comment type="subcellular location">
    <subcellularLocation>
        <location evidence="1">Cytoplasm</location>
        <location evidence="1">Myofibril</location>
        <location evidence="1">Sarcomere</location>
    </subcellularLocation>
</comment>
<gene>
    <name type="primary">TCAP</name>
</gene>
<dbReference type="EMBL" id="AY428575">
    <property type="protein sequence ID" value="AAR11378.1"/>
    <property type="molecule type" value="Genomic_DNA"/>
</dbReference>
<dbReference type="EMBL" id="BC103048">
    <property type="protein sequence ID" value="AAI03049.1"/>
    <property type="molecule type" value="mRNA"/>
</dbReference>
<dbReference type="EMBL" id="BC142094">
    <property type="protein sequence ID" value="AAI42095.1"/>
    <property type="molecule type" value="mRNA"/>
</dbReference>
<dbReference type="RefSeq" id="NP_001014915.1">
    <property type="nucleotide sequence ID" value="NM_001014915.2"/>
</dbReference>
<dbReference type="SMR" id="Q6T8D8"/>
<dbReference type="FunCoup" id="Q6T8D8">
    <property type="interactions" value="105"/>
</dbReference>
<dbReference type="STRING" id="9913.ENSBTAP00000015579"/>
<dbReference type="PaxDb" id="9913-ENSBTAP00000015579"/>
<dbReference type="Ensembl" id="ENSBTAT00000015579.3">
    <property type="protein sequence ID" value="ENSBTAP00000015579.2"/>
    <property type="gene ID" value="ENSBTAG00000011730.4"/>
</dbReference>
<dbReference type="GeneID" id="513257"/>
<dbReference type="KEGG" id="bta:513257"/>
<dbReference type="CTD" id="8557"/>
<dbReference type="VEuPathDB" id="HostDB:ENSBTAG00000011730"/>
<dbReference type="VGNC" id="VGNC:35678">
    <property type="gene designation" value="TCAP"/>
</dbReference>
<dbReference type="eggNOG" id="ENOG502S21D">
    <property type="taxonomic scope" value="Eukaryota"/>
</dbReference>
<dbReference type="GeneTree" id="ENSGT00390000012014"/>
<dbReference type="HOGENOM" id="CLU_128806_0_0_1"/>
<dbReference type="InParanoid" id="Q6T8D8"/>
<dbReference type="OMA" id="QCQAVVQ"/>
<dbReference type="OrthoDB" id="8532967at2759"/>
<dbReference type="TreeFam" id="TF333228"/>
<dbReference type="Reactome" id="R-BTA-390522">
    <property type="pathway name" value="Striated Muscle Contraction"/>
</dbReference>
<dbReference type="Proteomes" id="UP000009136">
    <property type="component" value="Chromosome 19"/>
</dbReference>
<dbReference type="Bgee" id="ENSBTAG00000011730">
    <property type="expression patterns" value="Expressed in laryngeal cartilage and 102 other cell types or tissues"/>
</dbReference>
<dbReference type="GO" id="GO:0030018">
    <property type="term" value="C:Z disc"/>
    <property type="evidence" value="ECO:0000318"/>
    <property type="project" value="GO_Central"/>
</dbReference>
<dbReference type="GO" id="GO:0030674">
    <property type="term" value="F:protein-macromolecule adaptor activity"/>
    <property type="evidence" value="ECO:0000318"/>
    <property type="project" value="GO_Central"/>
</dbReference>
<dbReference type="GO" id="GO:0008307">
    <property type="term" value="F:structural constituent of muscle"/>
    <property type="evidence" value="ECO:0000318"/>
    <property type="project" value="GO_Central"/>
</dbReference>
<dbReference type="GO" id="GO:0031432">
    <property type="term" value="F:titin binding"/>
    <property type="evidence" value="ECO:0000318"/>
    <property type="project" value="GO_Central"/>
</dbReference>
<dbReference type="GO" id="GO:0060048">
    <property type="term" value="P:cardiac muscle contraction"/>
    <property type="evidence" value="ECO:0000318"/>
    <property type="project" value="GO_Central"/>
</dbReference>
<dbReference type="GO" id="GO:0055008">
    <property type="term" value="P:cardiac muscle tissue morphogenesis"/>
    <property type="evidence" value="ECO:0000318"/>
    <property type="project" value="GO_Central"/>
</dbReference>
<dbReference type="GO" id="GO:0055003">
    <property type="term" value="P:cardiac myofibril assembly"/>
    <property type="evidence" value="ECO:0000318"/>
    <property type="project" value="GO_Central"/>
</dbReference>
<dbReference type="GO" id="GO:0035995">
    <property type="term" value="P:detection of muscle stretch"/>
    <property type="evidence" value="ECO:0000318"/>
    <property type="project" value="GO_Central"/>
</dbReference>
<dbReference type="GO" id="GO:0048769">
    <property type="term" value="P:sarcomerogenesis"/>
    <property type="evidence" value="ECO:0000318"/>
    <property type="project" value="GO_Central"/>
</dbReference>
<dbReference type="GO" id="GO:0003009">
    <property type="term" value="P:skeletal muscle contraction"/>
    <property type="evidence" value="ECO:0000318"/>
    <property type="project" value="GO_Central"/>
</dbReference>
<dbReference type="GO" id="GO:0030241">
    <property type="term" value="P:skeletal muscle myosin thick filament assembly"/>
    <property type="evidence" value="ECO:0000318"/>
    <property type="project" value="GO_Central"/>
</dbReference>
<dbReference type="GO" id="GO:0030240">
    <property type="term" value="P:skeletal muscle thin filament assembly"/>
    <property type="evidence" value="ECO:0000318"/>
    <property type="project" value="GO_Central"/>
</dbReference>
<dbReference type="FunFam" id="2.20.160.10:FF:000001">
    <property type="entry name" value="Titin-cap (Telethonin)"/>
    <property type="match status" value="1"/>
</dbReference>
<dbReference type="Gene3D" id="2.20.160.10">
    <property type="entry name" value="titin domain like"/>
    <property type="match status" value="1"/>
</dbReference>
<dbReference type="InterPro" id="IPR015667">
    <property type="entry name" value="Telethonin"/>
</dbReference>
<dbReference type="InterPro" id="IPR023111">
    <property type="entry name" value="Titin-like_dom_sf"/>
</dbReference>
<dbReference type="PANTHER" id="PTHR15143">
    <property type="entry name" value="TELETHONIN"/>
    <property type="match status" value="1"/>
</dbReference>
<dbReference type="PANTHER" id="PTHR15143:SF0">
    <property type="entry name" value="TELETHONIN"/>
    <property type="match status" value="1"/>
</dbReference>
<dbReference type="Pfam" id="PF09470">
    <property type="entry name" value="Telethonin"/>
    <property type="match status" value="1"/>
</dbReference>
<sequence>MATSELSCLVSEENCERREAFWAEWKDLTLSTRPEEGCSLHEEDTQRHETYHRQGQCQALVQRSPWLVMRMGILGRGLQEYQLPYQRVLPLPIFTPAKVGTKEEREETPIQLQELLALETALGGQCVDRQDVAEITKQLPPVVPVSKPGTLRRSLSRSMSQEAQRG</sequence>
<reference key="1">
    <citation type="submission" date="2003-10" db="EMBL/GenBank/DDBJ databases">
        <title>Cloning and characterization of bovine telethonin gene.</title>
        <authorList>
            <person name="Yu S.L."/>
            <person name="Chung H.J."/>
            <person name="Jung K.C."/>
            <person name="Sang B.C."/>
            <person name="Yoon D.H."/>
            <person name="Kata S.R."/>
            <person name="Womack J.E."/>
            <person name="Lee J.H."/>
        </authorList>
    </citation>
    <scope>NUCLEOTIDE SEQUENCE [GENOMIC DNA]</scope>
</reference>
<reference key="2">
    <citation type="submission" date="2007-06" db="EMBL/GenBank/DDBJ databases">
        <authorList>
            <consortium name="NIH - Mammalian Gene Collection (MGC) project"/>
        </authorList>
    </citation>
    <scope>NUCLEOTIDE SEQUENCE [LARGE SCALE MRNA]</scope>
    <source>
        <strain>Hereford</strain>
        <tissue>Heart ventricle</tissue>
    </source>
</reference>
<proteinExistence type="evidence at transcript level"/>